<feature type="chain" id="PRO_0000082578" description="Ubiquitin-conjugating enzyme E2 10">
    <location>
        <begin position="1"/>
        <end position="148"/>
    </location>
</feature>
<feature type="domain" description="UBC core" evidence="1">
    <location>
        <begin position="1"/>
        <end position="147"/>
    </location>
</feature>
<feature type="active site" description="Glycyl thioester intermediate" evidence="1 2">
    <location>
        <position position="85"/>
    </location>
</feature>
<feature type="sequence conflict" description="In Ref. 1; Z14993." evidence="9" ref="1">
    <original>A</original>
    <variation>T</variation>
    <location>
        <position position="23"/>
    </location>
</feature>
<feature type="sequence conflict" description="In Ref. 1; Z14993." evidence="9" ref="1">
    <original>S</original>
    <variation>T</variation>
    <location>
        <position position="140"/>
    </location>
</feature>
<feature type="sequence conflict" description="In Ref. 5; AAM63450." evidence="9" ref="5">
    <original>K</original>
    <variation>E</variation>
    <location>
        <position position="144"/>
    </location>
</feature>
<sequence>MASKRILKELKDLQKDPPTSCSAGPVAEDMFHWQATIMGPSESPYAGGVFLVTIHFPPDYPFKPPKVAFRTKVFHPNINSNGSICLDILKEQWSPALTISKVLLSICSLLTDPNPDDPLVPEIAHMYKTDKNKYESTARSWTQKYAMG</sequence>
<name>UBC10_ARATH</name>
<organism>
    <name type="scientific">Arabidopsis thaliana</name>
    <name type="common">Mouse-ear cress</name>
    <dbReference type="NCBI Taxonomy" id="3702"/>
    <lineage>
        <taxon>Eukaryota</taxon>
        <taxon>Viridiplantae</taxon>
        <taxon>Streptophyta</taxon>
        <taxon>Embryophyta</taxon>
        <taxon>Tracheophyta</taxon>
        <taxon>Spermatophyta</taxon>
        <taxon>Magnoliopsida</taxon>
        <taxon>eudicotyledons</taxon>
        <taxon>Gunneridae</taxon>
        <taxon>Pentapetalae</taxon>
        <taxon>rosids</taxon>
        <taxon>malvids</taxon>
        <taxon>Brassicales</taxon>
        <taxon>Brassicaceae</taxon>
        <taxon>Camelineae</taxon>
        <taxon>Arabidopsis</taxon>
    </lineage>
</organism>
<comment type="function">
    <text evidence="3">Accepts the ubiquitin from the E1 complex and catalyzes its covalent attachment to other proteins. Mediates the selective degradation of short-lived and abnormal proteins.</text>
</comment>
<comment type="catalytic activity">
    <reaction evidence="1 2">
        <text>S-ubiquitinyl-[E1 ubiquitin-activating enzyme]-L-cysteine + [E2 ubiquitin-conjugating enzyme]-L-cysteine = [E1 ubiquitin-activating enzyme]-L-cysteine + S-ubiquitinyl-[E2 ubiquitin-conjugating enzyme]-L-cysteine.</text>
        <dbReference type="EC" id="2.3.2.23"/>
    </reaction>
</comment>
<comment type="pathway">
    <text evidence="1">Protein modification; protein ubiquitination.</text>
</comment>
<comment type="subunit">
    <text evidence="4 5 6">Interacts with CHIP and the E3 ubiquitin ligase BB. Associates with the E3 ubiquitin ligase JMJ24 (PubMed:26979329).</text>
</comment>
<comment type="alternative products">
    <event type="alternative splicing"/>
    <isoform>
        <id>P35133-1</id>
        <name>1</name>
        <sequence type="displayed"/>
    </isoform>
    <text>A number of isoforms are produced. According to EST sequences.</text>
</comment>
<comment type="tissue specificity">
    <text evidence="3">Ubiquitously expressed with the highest levels in rosette leaves, roots and petals.</text>
</comment>
<comment type="similarity">
    <text evidence="1">Belongs to the ubiquitin-conjugating enzyme family.</text>
</comment>
<comment type="sequence caution" evidence="9">
    <conflict type="miscellaneous discrepancy">
        <sequence resource="EMBL" id="Z14993"/>
    </conflict>
    <text>Artifacts of PCR amplification. Originally thought to be UBC12 isoform.</text>
</comment>
<gene>
    <name evidence="7 8" type="primary">UBC10</name>
    <name type="synonym">UBC12</name>
    <name evidence="10" type="ordered locus">At5g53300</name>
    <name evidence="11" type="ORF">K19E1.10</name>
</gene>
<dbReference type="EC" id="2.3.2.23" evidence="1 2"/>
<dbReference type="EMBL" id="Z14991">
    <property type="protein sequence ID" value="CAA78715.1"/>
    <property type="molecule type" value="mRNA"/>
</dbReference>
<dbReference type="EMBL" id="L00640">
    <property type="protein sequence ID" value="AAA32895.1"/>
    <property type="molecule type" value="mRNA"/>
</dbReference>
<dbReference type="EMBL" id="Z14993">
    <property type="status" value="NOT_ANNOTATED_CDS"/>
    <property type="molecule type" value="Genomic_DNA"/>
</dbReference>
<dbReference type="EMBL" id="DQ027024">
    <property type="protein sequence ID" value="AAY44850.1"/>
    <property type="molecule type" value="mRNA"/>
</dbReference>
<dbReference type="EMBL" id="AB013388">
    <property type="protein sequence ID" value="BAB09792.1"/>
    <property type="molecule type" value="Genomic_DNA"/>
</dbReference>
<dbReference type="EMBL" id="CP002688">
    <property type="protein sequence ID" value="AED96334.1"/>
    <property type="molecule type" value="Genomic_DNA"/>
</dbReference>
<dbReference type="EMBL" id="CP002688">
    <property type="protein sequence ID" value="AED96335.1"/>
    <property type="molecule type" value="Genomic_DNA"/>
</dbReference>
<dbReference type="EMBL" id="CP002688">
    <property type="protein sequence ID" value="AED96337.1"/>
    <property type="molecule type" value="Genomic_DNA"/>
</dbReference>
<dbReference type="EMBL" id="AF324718">
    <property type="protein sequence ID" value="AAG40069.1"/>
    <property type="molecule type" value="mRNA"/>
</dbReference>
<dbReference type="EMBL" id="AF325005">
    <property type="protein sequence ID" value="AAG40357.1"/>
    <property type="molecule type" value="mRNA"/>
</dbReference>
<dbReference type="EMBL" id="AF326872">
    <property type="protein sequence ID" value="AAG41454.1"/>
    <property type="molecule type" value="mRNA"/>
</dbReference>
<dbReference type="EMBL" id="AY039566">
    <property type="protein sequence ID" value="AAK62621.1"/>
    <property type="molecule type" value="mRNA"/>
</dbReference>
<dbReference type="EMBL" id="AY065059">
    <property type="protein sequence ID" value="AAL57693.1"/>
    <property type="molecule type" value="mRNA"/>
</dbReference>
<dbReference type="EMBL" id="AY113937">
    <property type="protein sequence ID" value="AAM44985.1"/>
    <property type="molecule type" value="mRNA"/>
</dbReference>
<dbReference type="EMBL" id="AY129488">
    <property type="protein sequence ID" value="AAM91074.1"/>
    <property type="molecule type" value="mRNA"/>
</dbReference>
<dbReference type="EMBL" id="AY086447">
    <property type="protein sequence ID" value="AAM63450.1"/>
    <property type="molecule type" value="mRNA"/>
</dbReference>
<dbReference type="PIR" id="S32672">
    <property type="entry name" value="S32672"/>
</dbReference>
<dbReference type="RefSeq" id="NP_001190528.1">
    <molecule id="P35133-1"/>
    <property type="nucleotide sequence ID" value="NM_001203599.1"/>
</dbReference>
<dbReference type="RefSeq" id="NP_568788.1">
    <molecule id="P35133-1"/>
    <property type="nucleotide sequence ID" value="NM_124709.2"/>
</dbReference>
<dbReference type="RefSeq" id="NP_851181.1">
    <molecule id="P35133-1"/>
    <property type="nucleotide sequence ID" value="NM_180850.3"/>
</dbReference>
<dbReference type="SMR" id="P35133"/>
<dbReference type="BioGRID" id="20656">
    <property type="interactions" value="11"/>
</dbReference>
<dbReference type="FunCoup" id="P35133">
    <property type="interactions" value="4255"/>
</dbReference>
<dbReference type="STRING" id="3702.P35133"/>
<dbReference type="PaxDb" id="3702-AT5G53300.1"/>
<dbReference type="EnsemblPlants" id="AT5G53300.1">
    <molecule id="P35133-1"/>
    <property type="protein sequence ID" value="AT5G53300.1"/>
    <property type="gene ID" value="AT5G53300"/>
</dbReference>
<dbReference type="EnsemblPlants" id="AT5G53300.2">
    <molecule id="P35133-1"/>
    <property type="protein sequence ID" value="AT5G53300.2"/>
    <property type="gene ID" value="AT5G53300"/>
</dbReference>
<dbReference type="EnsemblPlants" id="AT5G53300.4">
    <molecule id="P35133-1"/>
    <property type="protein sequence ID" value="AT5G53300.4"/>
    <property type="gene ID" value="AT5G53300"/>
</dbReference>
<dbReference type="GeneID" id="835411"/>
<dbReference type="Gramene" id="AT5G53300.1">
    <molecule id="P35133-1"/>
    <property type="protein sequence ID" value="AT5G53300.1"/>
    <property type="gene ID" value="AT5G53300"/>
</dbReference>
<dbReference type="Gramene" id="AT5G53300.2">
    <molecule id="P35133-1"/>
    <property type="protein sequence ID" value="AT5G53300.2"/>
    <property type="gene ID" value="AT5G53300"/>
</dbReference>
<dbReference type="Gramene" id="AT5G53300.4">
    <molecule id="P35133-1"/>
    <property type="protein sequence ID" value="AT5G53300.4"/>
    <property type="gene ID" value="AT5G53300"/>
</dbReference>
<dbReference type="KEGG" id="ath:AT5G53300"/>
<dbReference type="Araport" id="AT5G53300"/>
<dbReference type="TAIR" id="AT5G53300">
    <property type="gene designation" value="UBC10"/>
</dbReference>
<dbReference type="eggNOG" id="KOG0417">
    <property type="taxonomic scope" value="Eukaryota"/>
</dbReference>
<dbReference type="HOGENOM" id="CLU_030988_13_3_1"/>
<dbReference type="InParanoid" id="P35133"/>
<dbReference type="OMA" id="PNIASMY"/>
<dbReference type="OrthoDB" id="581474at2759"/>
<dbReference type="PhylomeDB" id="P35133"/>
<dbReference type="UniPathway" id="UPA00143"/>
<dbReference type="PRO" id="PR:P35133"/>
<dbReference type="Proteomes" id="UP000006548">
    <property type="component" value="Chromosome 5"/>
</dbReference>
<dbReference type="ExpressionAtlas" id="P35133">
    <property type="expression patterns" value="baseline and differential"/>
</dbReference>
<dbReference type="GO" id="GO:0005524">
    <property type="term" value="F:ATP binding"/>
    <property type="evidence" value="ECO:0007669"/>
    <property type="project" value="UniProtKB-KW"/>
</dbReference>
<dbReference type="GO" id="GO:0061631">
    <property type="term" value="F:ubiquitin conjugating enzyme activity"/>
    <property type="evidence" value="ECO:0007669"/>
    <property type="project" value="UniProtKB-EC"/>
</dbReference>
<dbReference type="GO" id="GO:0031625">
    <property type="term" value="F:ubiquitin protein ligase binding"/>
    <property type="evidence" value="ECO:0000353"/>
    <property type="project" value="UniProtKB"/>
</dbReference>
<dbReference type="GO" id="GO:0004842">
    <property type="term" value="F:ubiquitin-protein transferase activity"/>
    <property type="evidence" value="ECO:0000314"/>
    <property type="project" value="TAIR"/>
</dbReference>
<dbReference type="GO" id="GO:0016567">
    <property type="term" value="P:protein ubiquitination"/>
    <property type="evidence" value="ECO:0007669"/>
    <property type="project" value="UniProtKB-UniPathway"/>
</dbReference>
<dbReference type="GO" id="GO:0006511">
    <property type="term" value="P:ubiquitin-dependent protein catabolic process"/>
    <property type="evidence" value="ECO:0000314"/>
    <property type="project" value="TAIR"/>
</dbReference>
<dbReference type="CDD" id="cd23792">
    <property type="entry name" value="UBCc_UBE2D"/>
    <property type="match status" value="1"/>
</dbReference>
<dbReference type="FunFam" id="3.10.110.10:FF:000001">
    <property type="entry name" value="Ubiquitin-conjugating enzyme 28, E2"/>
    <property type="match status" value="1"/>
</dbReference>
<dbReference type="Gene3D" id="3.10.110.10">
    <property type="entry name" value="Ubiquitin Conjugating Enzyme"/>
    <property type="match status" value="1"/>
</dbReference>
<dbReference type="InterPro" id="IPR000608">
    <property type="entry name" value="UBQ-conjugat_E2_core"/>
</dbReference>
<dbReference type="InterPro" id="IPR023313">
    <property type="entry name" value="UBQ-conjugating_AS"/>
</dbReference>
<dbReference type="InterPro" id="IPR016135">
    <property type="entry name" value="UBQ-conjugating_enzyme/RWD"/>
</dbReference>
<dbReference type="PANTHER" id="PTHR24068">
    <property type="entry name" value="UBIQUITIN-CONJUGATING ENZYME E2"/>
    <property type="match status" value="1"/>
</dbReference>
<dbReference type="Pfam" id="PF00179">
    <property type="entry name" value="UQ_con"/>
    <property type="match status" value="1"/>
</dbReference>
<dbReference type="SMART" id="SM00212">
    <property type="entry name" value="UBCc"/>
    <property type="match status" value="1"/>
</dbReference>
<dbReference type="SUPFAM" id="SSF54495">
    <property type="entry name" value="UBC-like"/>
    <property type="match status" value="1"/>
</dbReference>
<dbReference type="PROSITE" id="PS00183">
    <property type="entry name" value="UBC_1"/>
    <property type="match status" value="1"/>
</dbReference>
<dbReference type="PROSITE" id="PS50127">
    <property type="entry name" value="UBC_2"/>
    <property type="match status" value="1"/>
</dbReference>
<evidence type="ECO:0000255" key="1">
    <source>
        <dbReference type="PROSITE-ProRule" id="PRU00388"/>
    </source>
</evidence>
<evidence type="ECO:0000255" key="2">
    <source>
        <dbReference type="PROSITE-ProRule" id="PRU10133"/>
    </source>
</evidence>
<evidence type="ECO:0000269" key="3">
    <source>
    </source>
</evidence>
<evidence type="ECO:0000269" key="4">
    <source>
    </source>
</evidence>
<evidence type="ECO:0000269" key="5">
    <source>
    </source>
</evidence>
<evidence type="ECO:0000269" key="6">
    <source>
    </source>
</evidence>
<evidence type="ECO:0000303" key="7">
    <source>
    </source>
</evidence>
<evidence type="ECO:0000303" key="8">
    <source>
    </source>
</evidence>
<evidence type="ECO:0000305" key="9"/>
<evidence type="ECO:0000312" key="10">
    <source>
        <dbReference type="Araport" id="AT5G53300"/>
    </source>
</evidence>
<evidence type="ECO:0000312" key="11">
    <source>
        <dbReference type="EMBL" id="BAB09792.1"/>
    </source>
</evidence>
<proteinExistence type="evidence at protein level"/>
<accession>P35133</accession>
<accession>P56617</accession>
<accession>Q4TZ00</accession>
<accession>Q8LCR4</accession>
<keyword id="KW-0025">Alternative splicing</keyword>
<keyword id="KW-0067">ATP-binding</keyword>
<keyword id="KW-0547">Nucleotide-binding</keyword>
<keyword id="KW-1185">Reference proteome</keyword>
<keyword id="KW-0808">Transferase</keyword>
<keyword id="KW-0833">Ubl conjugation pathway</keyword>
<protein>
    <recommendedName>
        <fullName evidence="7 8">Ubiquitin-conjugating enzyme E2 10</fullName>
        <ecNumber evidence="1 2">2.3.2.23</ecNumber>
    </recommendedName>
    <alternativeName>
        <fullName evidence="7 8">E2 ubiquitin-conjugating enzyme 10</fullName>
    </alternativeName>
    <alternativeName>
        <fullName evidence="7 8">Ubiquitin carrier protein 10/12</fullName>
    </alternativeName>
    <alternativeName>
        <fullName evidence="7 8">Ubiquitin-conjugating enzyme E2-17 kDa 10/12</fullName>
    </alternativeName>
    <alternativeName>
        <fullName evidence="7 8">Ubiquitin-protein ligase 10/12</fullName>
    </alternativeName>
</protein>
<reference key="1">
    <citation type="journal article" date="1993" name="Plant J.">
        <title>Homologs of the essential ubiquitin conjugating enzymes UBC1, 4, and 5 in yeast are encoded by a multigene family in Arabidopsis thaliana.</title>
        <authorList>
            <person name="Girod P.-A."/>
            <person name="Carpenter T.B."/>
            <person name="van Nocker S."/>
            <person name="Sullivan M.L."/>
            <person name="Vierstra R.D."/>
        </authorList>
    </citation>
    <scope>NUCLEOTIDE SEQUENCE [GENOMIC DNA / MRNA]</scope>
    <source>
        <strain>cv. Columbia</strain>
        <tissue>Leaf</tissue>
    </source>
</reference>
<reference key="2">
    <citation type="journal article" date="2005" name="Plant Physiol.">
        <title>Genome analysis and functional characterization of the E2 and RING-type E3 ligase ubiquitination enzymes of Arabidopsis.</title>
        <authorList>
            <person name="Kraft E."/>
            <person name="Stone S.L."/>
            <person name="Ma L."/>
            <person name="Su N."/>
            <person name="Gao Y."/>
            <person name="Lau O.-S."/>
            <person name="Deng X.-W."/>
            <person name="Callis J."/>
        </authorList>
    </citation>
    <scope>NUCLEOTIDE SEQUENCE [MRNA]</scope>
    <scope>FUNCTION</scope>
    <scope>TISSUE SPECIFICITY</scope>
    <scope>GENE FAMILY</scope>
    <scope>NOMENCLATURE</scope>
</reference>
<reference key="3">
    <citation type="journal article" date="1998" name="DNA Res.">
        <title>Structural analysis of Arabidopsis thaliana chromosome 5. VI. Sequence features of the regions of 1,367,185 bp covered by 19 physically assigned P1 and TAC clones.</title>
        <authorList>
            <person name="Kotani H."/>
            <person name="Nakamura Y."/>
            <person name="Sato S."/>
            <person name="Asamizu E."/>
            <person name="Kaneko T."/>
            <person name="Miyajima N."/>
            <person name="Tabata S."/>
        </authorList>
    </citation>
    <scope>NUCLEOTIDE SEQUENCE [LARGE SCALE GENOMIC DNA]</scope>
    <source>
        <strain>cv. Columbia</strain>
    </source>
</reference>
<reference key="4">
    <citation type="journal article" date="2017" name="Plant J.">
        <title>Araport11: a complete reannotation of the Arabidopsis thaliana reference genome.</title>
        <authorList>
            <person name="Cheng C.Y."/>
            <person name="Krishnakumar V."/>
            <person name="Chan A.P."/>
            <person name="Thibaud-Nissen F."/>
            <person name="Schobel S."/>
            <person name="Town C.D."/>
        </authorList>
    </citation>
    <scope>GENOME REANNOTATION</scope>
    <source>
        <strain>cv. Columbia</strain>
    </source>
</reference>
<reference key="5">
    <citation type="journal article" date="2003" name="Science">
        <title>Empirical analysis of transcriptional activity in the Arabidopsis genome.</title>
        <authorList>
            <person name="Yamada K."/>
            <person name="Lim J."/>
            <person name="Dale J.M."/>
            <person name="Chen H."/>
            <person name="Shinn P."/>
            <person name="Palm C.J."/>
            <person name="Southwick A.M."/>
            <person name="Wu H.C."/>
            <person name="Kim C.J."/>
            <person name="Nguyen M."/>
            <person name="Pham P.K."/>
            <person name="Cheuk R.F."/>
            <person name="Karlin-Newmann G."/>
            <person name="Liu S.X."/>
            <person name="Lam B."/>
            <person name="Sakano H."/>
            <person name="Wu T."/>
            <person name="Yu G."/>
            <person name="Miranda M."/>
            <person name="Quach H.L."/>
            <person name="Tripp M."/>
            <person name="Chang C.H."/>
            <person name="Lee J.M."/>
            <person name="Toriumi M.J."/>
            <person name="Chan M.M."/>
            <person name="Tang C.C."/>
            <person name="Onodera C.S."/>
            <person name="Deng J.M."/>
            <person name="Akiyama K."/>
            <person name="Ansari Y."/>
            <person name="Arakawa T."/>
            <person name="Banh J."/>
            <person name="Banno F."/>
            <person name="Bowser L."/>
            <person name="Brooks S.Y."/>
            <person name="Carninci P."/>
            <person name="Chao Q."/>
            <person name="Choy N."/>
            <person name="Enju A."/>
            <person name="Goldsmith A.D."/>
            <person name="Gurjal M."/>
            <person name="Hansen N.F."/>
            <person name="Hayashizaki Y."/>
            <person name="Johnson-Hopson C."/>
            <person name="Hsuan V.W."/>
            <person name="Iida K."/>
            <person name="Karnes M."/>
            <person name="Khan S."/>
            <person name="Koesema E."/>
            <person name="Ishida J."/>
            <person name="Jiang P.X."/>
            <person name="Jones T."/>
            <person name="Kawai J."/>
            <person name="Kamiya A."/>
            <person name="Meyers C."/>
            <person name="Nakajima M."/>
            <person name="Narusaka M."/>
            <person name="Seki M."/>
            <person name="Sakurai T."/>
            <person name="Satou M."/>
            <person name="Tamse R."/>
            <person name="Vaysberg M."/>
            <person name="Wallender E.K."/>
            <person name="Wong C."/>
            <person name="Yamamura Y."/>
            <person name="Yuan S."/>
            <person name="Shinozaki K."/>
            <person name="Davis R.W."/>
            <person name="Theologis A."/>
            <person name="Ecker J.R."/>
        </authorList>
    </citation>
    <scope>NUCLEOTIDE SEQUENCE [LARGE SCALE MRNA]</scope>
    <source>
        <strain>cv. Columbia</strain>
    </source>
</reference>
<reference key="6">
    <citation type="submission" date="2002-03" db="EMBL/GenBank/DDBJ databases">
        <title>Full-length cDNA from Arabidopsis thaliana.</title>
        <authorList>
            <person name="Brover V.V."/>
            <person name="Troukhan M.E."/>
            <person name="Alexandrov N.A."/>
            <person name="Lu Y.-P."/>
            <person name="Flavell R.B."/>
            <person name="Feldmann K.A."/>
        </authorList>
    </citation>
    <scope>NUCLEOTIDE SEQUENCE [LARGE SCALE MRNA]</scope>
</reference>
<reference key="7">
    <citation type="journal article" date="2006" name="Curr. Biol.">
        <title>The E3 ubiquitin ligase BIG BROTHER controls arabidopsis organ size in a dosage-dependent manner.</title>
        <authorList>
            <person name="Disch S."/>
            <person name="Anastasiou E."/>
            <person name="Sharma V.K."/>
            <person name="Laux T."/>
            <person name="Fletcher J.C."/>
            <person name="Lenhard M."/>
        </authorList>
    </citation>
    <scope>INTERACTION WITH BB</scope>
</reference>
<reference key="8">
    <citation type="journal article" date="2006" name="Plant J.">
        <title>AtCHIP functions as an E3 ubiquitin ligase of protein phosphatase 2A subunits and alters plant response to abscisic acid treatment.</title>
        <authorList>
            <person name="Luo J."/>
            <person name="Shen G."/>
            <person name="Yan J."/>
            <person name="He C."/>
            <person name="Zhang H."/>
        </authorList>
    </citation>
    <scope>INTERACTION WITH CHIP</scope>
</reference>
<reference key="9">
    <citation type="journal article" date="2016" name="Plant Physiol.">
        <title>A JUMONJI protein with E3 ligase and histone H3 binding activities affects transposon silencing in Arabidopsis.</title>
        <authorList>
            <person name="Kabelitz T."/>
            <person name="Brzezinka K."/>
            <person name="Friedrich T."/>
            <person name="Gorka M."/>
            <person name="Graf A."/>
            <person name="Kappel C."/>
            <person name="Baeurle I."/>
        </authorList>
    </citation>
    <scope>INTERACTION WITH JMJ24</scope>
    <source>
        <strain>cv. Columbia</strain>
    </source>
</reference>